<dbReference type="EMBL" id="AK016480">
    <property type="protein sequence ID" value="BAB30260.1"/>
    <property type="molecule type" value="mRNA"/>
</dbReference>
<dbReference type="EMBL" id="AK028498">
    <property type="protein sequence ID" value="BAC25980.1"/>
    <property type="molecule type" value="mRNA"/>
</dbReference>
<dbReference type="EMBL" id="AK038320">
    <property type="protein sequence ID" value="BAC29968.1"/>
    <property type="status" value="ALT_FRAME"/>
    <property type="molecule type" value="mRNA"/>
</dbReference>
<dbReference type="EMBL" id="AK122560">
    <property type="protein sequence ID" value="BAC65842.1"/>
    <property type="status" value="ALT_INIT"/>
    <property type="molecule type" value="mRNA"/>
</dbReference>
<dbReference type="EMBL" id="BC043127">
    <property type="protein sequence ID" value="AAH43127.1"/>
    <property type="molecule type" value="mRNA"/>
</dbReference>
<dbReference type="EMBL" id="BC055330">
    <property type="protein sequence ID" value="AAH55330.1"/>
    <property type="molecule type" value="mRNA"/>
</dbReference>
<dbReference type="EMBL" id="BC057374">
    <property type="protein sequence ID" value="AAH57374.1"/>
    <property type="molecule type" value="mRNA"/>
</dbReference>
<dbReference type="CCDS" id="CCDS30127.1">
    <molecule id="Q9D4J7-1"/>
</dbReference>
<dbReference type="CCDS" id="CCDS72380.1">
    <molecule id="Q9D4J7-2"/>
</dbReference>
<dbReference type="RefSeq" id="NP_001277475.1">
    <molecule id="Q9D4J7-2"/>
    <property type="nucleotide sequence ID" value="NM_001290546.1"/>
</dbReference>
<dbReference type="RefSeq" id="NP_081918.1">
    <molecule id="Q9D4J7-1"/>
    <property type="nucleotide sequence ID" value="NM_027642.2"/>
</dbReference>
<dbReference type="SMR" id="Q9D4J7"/>
<dbReference type="BioGRID" id="214404">
    <property type="interactions" value="6"/>
</dbReference>
<dbReference type="FunCoup" id="Q9D4J7">
    <property type="interactions" value="3696"/>
</dbReference>
<dbReference type="STRING" id="10090.ENSMUSP00000077971"/>
<dbReference type="iPTMnet" id="Q9D4J7"/>
<dbReference type="PhosphoSitePlus" id="Q9D4J7"/>
<dbReference type="SwissPalm" id="Q9D4J7"/>
<dbReference type="jPOST" id="Q9D4J7"/>
<dbReference type="PaxDb" id="10090-ENSMUSP00000077971"/>
<dbReference type="PeptideAtlas" id="Q9D4J7"/>
<dbReference type="ProteomicsDB" id="288140">
    <molecule id="Q9D4J7-1"/>
</dbReference>
<dbReference type="ProteomicsDB" id="288141">
    <molecule id="Q9D4J7-2"/>
</dbReference>
<dbReference type="Pumba" id="Q9D4J7"/>
<dbReference type="Antibodypedia" id="426">
    <property type="antibodies" value="225 antibodies from 30 providers"/>
</dbReference>
<dbReference type="DNASU" id="70998"/>
<dbReference type="Ensembl" id="ENSMUST00000078944.13">
    <molecule id="Q9D4J7-1"/>
    <property type="protein sequence ID" value="ENSMUSP00000077971.7"/>
    <property type="gene ID" value="ENSMUSG00000025626.17"/>
</dbReference>
<dbReference type="Ensembl" id="ENSMUST00000154864.4">
    <molecule id="Q9D4J7-2"/>
    <property type="protein sequence ID" value="ENSMUSP00000130358.2"/>
    <property type="gene ID" value="ENSMUSG00000025626.17"/>
</dbReference>
<dbReference type="GeneID" id="70998"/>
<dbReference type="KEGG" id="mmu:70998"/>
<dbReference type="UCSC" id="uc009teo.2">
    <molecule id="Q9D4J7-1"/>
    <property type="organism name" value="mouse"/>
</dbReference>
<dbReference type="AGR" id="MGI:1918248"/>
<dbReference type="CTD" id="84295"/>
<dbReference type="MGI" id="MGI:1918248">
    <property type="gene designation" value="Phf6"/>
</dbReference>
<dbReference type="VEuPathDB" id="HostDB:ENSMUSG00000025626"/>
<dbReference type="eggNOG" id="KOG1084">
    <property type="taxonomic scope" value="Eukaryota"/>
</dbReference>
<dbReference type="GeneTree" id="ENSGT00950000182865"/>
<dbReference type="HOGENOM" id="CLU_049182_1_0_1"/>
<dbReference type="InParanoid" id="Q9D4J7"/>
<dbReference type="OMA" id="KHKKTPH"/>
<dbReference type="OrthoDB" id="2384350at2759"/>
<dbReference type="PhylomeDB" id="Q9D4J7"/>
<dbReference type="TreeFam" id="TF325426"/>
<dbReference type="BioGRID-ORCS" id="70998">
    <property type="hits" value="6 hits in 82 CRISPR screens"/>
</dbReference>
<dbReference type="ChiTaRS" id="Phf6">
    <property type="organism name" value="mouse"/>
</dbReference>
<dbReference type="PRO" id="PR:Q9D4J7"/>
<dbReference type="Proteomes" id="UP000000589">
    <property type="component" value="Chromosome X"/>
</dbReference>
<dbReference type="RNAct" id="Q9D4J7">
    <property type="molecule type" value="protein"/>
</dbReference>
<dbReference type="Bgee" id="ENSMUSG00000025626">
    <property type="expression patterns" value="Expressed in manus and 247 other cell types or tissues"/>
</dbReference>
<dbReference type="ExpressionAtlas" id="Q9D4J7">
    <property type="expression patterns" value="baseline and differential"/>
</dbReference>
<dbReference type="GO" id="GO:0000776">
    <property type="term" value="C:kinetochore"/>
    <property type="evidence" value="ECO:0007669"/>
    <property type="project" value="UniProtKB-KW"/>
</dbReference>
<dbReference type="GO" id="GO:0005730">
    <property type="term" value="C:nucleolus"/>
    <property type="evidence" value="ECO:0007669"/>
    <property type="project" value="UniProtKB-SubCell"/>
</dbReference>
<dbReference type="GO" id="GO:0005654">
    <property type="term" value="C:nucleoplasm"/>
    <property type="evidence" value="ECO:0007669"/>
    <property type="project" value="Ensembl"/>
</dbReference>
<dbReference type="GO" id="GO:0005634">
    <property type="term" value="C:nucleus"/>
    <property type="evidence" value="ECO:0000314"/>
    <property type="project" value="MGI"/>
</dbReference>
<dbReference type="GO" id="GO:0003677">
    <property type="term" value="F:DNA binding"/>
    <property type="evidence" value="ECO:0007669"/>
    <property type="project" value="UniProtKB-KW"/>
</dbReference>
<dbReference type="GO" id="GO:0042393">
    <property type="term" value="F:histone binding"/>
    <property type="evidence" value="ECO:0007669"/>
    <property type="project" value="Ensembl"/>
</dbReference>
<dbReference type="GO" id="GO:0042826">
    <property type="term" value="F:histone deacetylase binding"/>
    <property type="evidence" value="ECO:0007669"/>
    <property type="project" value="Ensembl"/>
</dbReference>
<dbReference type="GO" id="GO:0051219">
    <property type="term" value="F:phosphoprotein binding"/>
    <property type="evidence" value="ECO:0007669"/>
    <property type="project" value="Ensembl"/>
</dbReference>
<dbReference type="GO" id="GO:0043021">
    <property type="term" value="F:ribonucleoprotein complex binding"/>
    <property type="evidence" value="ECO:0007669"/>
    <property type="project" value="Ensembl"/>
</dbReference>
<dbReference type="GO" id="GO:0097110">
    <property type="term" value="F:scaffold protein binding"/>
    <property type="evidence" value="ECO:0007669"/>
    <property type="project" value="Ensembl"/>
</dbReference>
<dbReference type="GO" id="GO:0015631">
    <property type="term" value="F:tubulin binding"/>
    <property type="evidence" value="ECO:0007669"/>
    <property type="project" value="Ensembl"/>
</dbReference>
<dbReference type="GO" id="GO:0008270">
    <property type="term" value="F:zinc ion binding"/>
    <property type="evidence" value="ECO:0007669"/>
    <property type="project" value="UniProtKB-KW"/>
</dbReference>
<dbReference type="GO" id="GO:0001835">
    <property type="term" value="P:blastocyst hatching"/>
    <property type="evidence" value="ECO:0000315"/>
    <property type="project" value="MGI"/>
</dbReference>
<dbReference type="GO" id="GO:0000122">
    <property type="term" value="P:negative regulation of transcription by RNA polymerase II"/>
    <property type="evidence" value="ECO:0007669"/>
    <property type="project" value="Ensembl"/>
</dbReference>
<dbReference type="CDD" id="cd15710">
    <property type="entry name" value="ePHD1_PHF6"/>
    <property type="match status" value="1"/>
</dbReference>
<dbReference type="CDD" id="cd15711">
    <property type="entry name" value="ePHD2_PHF6"/>
    <property type="match status" value="1"/>
</dbReference>
<dbReference type="FunFam" id="3.30.40.10:FF:000219">
    <property type="entry name" value="PHD finger protein 6 isoform X1"/>
    <property type="match status" value="1"/>
</dbReference>
<dbReference type="FunFam" id="3.30.40.10:FF:000167">
    <property type="entry name" value="PHD finger protein 6 X-linked"/>
    <property type="match status" value="1"/>
</dbReference>
<dbReference type="Gene3D" id="3.30.40.10">
    <property type="entry name" value="Zinc/RING finger domain, C3HC4 (zinc finger)"/>
    <property type="match status" value="2"/>
</dbReference>
<dbReference type="InterPro" id="IPR034732">
    <property type="entry name" value="EPHD"/>
</dbReference>
<dbReference type="InterPro" id="IPR051188">
    <property type="entry name" value="PHD-type_Zinc_Finger"/>
</dbReference>
<dbReference type="InterPro" id="IPR001965">
    <property type="entry name" value="Znf_PHD"/>
</dbReference>
<dbReference type="InterPro" id="IPR013083">
    <property type="entry name" value="Znf_RING/FYVE/PHD"/>
</dbReference>
<dbReference type="PANTHER" id="PTHR12420">
    <property type="entry name" value="PHD FINGER PROTEIN"/>
    <property type="match status" value="1"/>
</dbReference>
<dbReference type="PANTHER" id="PTHR12420:SF15">
    <property type="entry name" value="PHD FINGER PROTEIN 6"/>
    <property type="match status" value="1"/>
</dbReference>
<dbReference type="Pfam" id="PF13771">
    <property type="entry name" value="zf-HC5HC2H"/>
    <property type="match status" value="2"/>
</dbReference>
<dbReference type="SMART" id="SM00249">
    <property type="entry name" value="PHD"/>
    <property type="match status" value="2"/>
</dbReference>
<dbReference type="PROSITE" id="PS51805">
    <property type="entry name" value="EPHD"/>
    <property type="match status" value="2"/>
</dbReference>
<sequence>MSSSIEQKKGSTRQRKCGFCKSNRDKECGQLLISENQKVAAHHKCMLFSSALVSSHSDNESLGGFSIEDVQKEIKRGTKLMCSLCHCPGATIGCDVKTCHRTYHYHCALHDKAQIREKPSQGIYMVYCRKHKKTAHNSEADLEESFNEHELEPSSPKTKKKSRKGRPRKTNLKGLPEDSRSTSSHGTDEMESSSYRDRSPHRSSPNDTRPKCGFCHVGEEENEARGKLHIFNAKKAAAHYKCMLFSSGTVQLTTTSRAEFGDFDIKTVLQEIKRGKRMKCTLCSQPGATIGCEIKACVKTYHYHCGVQDKAKYIENMSRGIYKLYCKNHSGNDERDEEDEERESKSRGRVAIDQQLTQQQLNGN</sequence>
<protein>
    <recommendedName>
        <fullName>PHD finger protein 6</fullName>
    </recommendedName>
</protein>
<keyword id="KW-0007">Acetylation</keyword>
<keyword id="KW-0025">Alternative splicing</keyword>
<keyword id="KW-0137">Centromere</keyword>
<keyword id="KW-0158">Chromosome</keyword>
<keyword id="KW-0238">DNA-binding</keyword>
<keyword id="KW-1017">Isopeptide bond</keyword>
<keyword id="KW-0995">Kinetochore</keyword>
<keyword id="KW-0479">Metal-binding</keyword>
<keyword id="KW-0539">Nucleus</keyword>
<keyword id="KW-0597">Phosphoprotein</keyword>
<keyword id="KW-1185">Reference proteome</keyword>
<keyword id="KW-0677">Repeat</keyword>
<keyword id="KW-0804">Transcription</keyword>
<keyword id="KW-0805">Transcription regulation</keyword>
<keyword id="KW-0832">Ubl conjugation</keyword>
<keyword id="KW-0862">Zinc</keyword>
<keyword id="KW-0863">Zinc-finger</keyword>
<gene>
    <name type="primary">Phf6</name>
    <name type="synonym">Kiaa1823</name>
</gene>
<name>PHF6_MOUSE</name>
<reference key="1">
    <citation type="journal article" date="2005" name="Science">
        <title>The transcriptional landscape of the mammalian genome.</title>
        <authorList>
            <person name="Carninci P."/>
            <person name="Kasukawa T."/>
            <person name="Katayama S."/>
            <person name="Gough J."/>
            <person name="Frith M.C."/>
            <person name="Maeda N."/>
            <person name="Oyama R."/>
            <person name="Ravasi T."/>
            <person name="Lenhard B."/>
            <person name="Wells C."/>
            <person name="Kodzius R."/>
            <person name="Shimokawa K."/>
            <person name="Bajic V.B."/>
            <person name="Brenner S.E."/>
            <person name="Batalov S."/>
            <person name="Forrest A.R."/>
            <person name="Zavolan M."/>
            <person name="Davis M.J."/>
            <person name="Wilming L.G."/>
            <person name="Aidinis V."/>
            <person name="Allen J.E."/>
            <person name="Ambesi-Impiombato A."/>
            <person name="Apweiler R."/>
            <person name="Aturaliya R.N."/>
            <person name="Bailey T.L."/>
            <person name="Bansal M."/>
            <person name="Baxter L."/>
            <person name="Beisel K.W."/>
            <person name="Bersano T."/>
            <person name="Bono H."/>
            <person name="Chalk A.M."/>
            <person name="Chiu K.P."/>
            <person name="Choudhary V."/>
            <person name="Christoffels A."/>
            <person name="Clutterbuck D.R."/>
            <person name="Crowe M.L."/>
            <person name="Dalla E."/>
            <person name="Dalrymple B.P."/>
            <person name="de Bono B."/>
            <person name="Della Gatta G."/>
            <person name="di Bernardo D."/>
            <person name="Down T."/>
            <person name="Engstrom P."/>
            <person name="Fagiolini M."/>
            <person name="Faulkner G."/>
            <person name="Fletcher C.F."/>
            <person name="Fukushima T."/>
            <person name="Furuno M."/>
            <person name="Futaki S."/>
            <person name="Gariboldi M."/>
            <person name="Georgii-Hemming P."/>
            <person name="Gingeras T.R."/>
            <person name="Gojobori T."/>
            <person name="Green R.E."/>
            <person name="Gustincich S."/>
            <person name="Harbers M."/>
            <person name="Hayashi Y."/>
            <person name="Hensch T.K."/>
            <person name="Hirokawa N."/>
            <person name="Hill D."/>
            <person name="Huminiecki L."/>
            <person name="Iacono M."/>
            <person name="Ikeo K."/>
            <person name="Iwama A."/>
            <person name="Ishikawa T."/>
            <person name="Jakt M."/>
            <person name="Kanapin A."/>
            <person name="Katoh M."/>
            <person name="Kawasawa Y."/>
            <person name="Kelso J."/>
            <person name="Kitamura H."/>
            <person name="Kitano H."/>
            <person name="Kollias G."/>
            <person name="Krishnan S.P."/>
            <person name="Kruger A."/>
            <person name="Kummerfeld S.K."/>
            <person name="Kurochkin I.V."/>
            <person name="Lareau L.F."/>
            <person name="Lazarevic D."/>
            <person name="Lipovich L."/>
            <person name="Liu J."/>
            <person name="Liuni S."/>
            <person name="McWilliam S."/>
            <person name="Madan Babu M."/>
            <person name="Madera M."/>
            <person name="Marchionni L."/>
            <person name="Matsuda H."/>
            <person name="Matsuzawa S."/>
            <person name="Miki H."/>
            <person name="Mignone F."/>
            <person name="Miyake S."/>
            <person name="Morris K."/>
            <person name="Mottagui-Tabar S."/>
            <person name="Mulder N."/>
            <person name="Nakano N."/>
            <person name="Nakauchi H."/>
            <person name="Ng P."/>
            <person name="Nilsson R."/>
            <person name="Nishiguchi S."/>
            <person name="Nishikawa S."/>
            <person name="Nori F."/>
            <person name="Ohara O."/>
            <person name="Okazaki Y."/>
            <person name="Orlando V."/>
            <person name="Pang K.C."/>
            <person name="Pavan W.J."/>
            <person name="Pavesi G."/>
            <person name="Pesole G."/>
            <person name="Petrovsky N."/>
            <person name="Piazza S."/>
            <person name="Reed J."/>
            <person name="Reid J.F."/>
            <person name="Ring B.Z."/>
            <person name="Ringwald M."/>
            <person name="Rost B."/>
            <person name="Ruan Y."/>
            <person name="Salzberg S.L."/>
            <person name="Sandelin A."/>
            <person name="Schneider C."/>
            <person name="Schoenbach C."/>
            <person name="Sekiguchi K."/>
            <person name="Semple C.A."/>
            <person name="Seno S."/>
            <person name="Sessa L."/>
            <person name="Sheng Y."/>
            <person name="Shibata Y."/>
            <person name="Shimada H."/>
            <person name="Shimada K."/>
            <person name="Silva D."/>
            <person name="Sinclair B."/>
            <person name="Sperling S."/>
            <person name="Stupka E."/>
            <person name="Sugiura K."/>
            <person name="Sultana R."/>
            <person name="Takenaka Y."/>
            <person name="Taki K."/>
            <person name="Tammoja K."/>
            <person name="Tan S.L."/>
            <person name="Tang S."/>
            <person name="Taylor M.S."/>
            <person name="Tegner J."/>
            <person name="Teichmann S.A."/>
            <person name="Ueda H.R."/>
            <person name="van Nimwegen E."/>
            <person name="Verardo R."/>
            <person name="Wei C.L."/>
            <person name="Yagi K."/>
            <person name="Yamanishi H."/>
            <person name="Zabarovsky E."/>
            <person name="Zhu S."/>
            <person name="Zimmer A."/>
            <person name="Hide W."/>
            <person name="Bult C."/>
            <person name="Grimmond S.M."/>
            <person name="Teasdale R.D."/>
            <person name="Liu E.T."/>
            <person name="Brusic V."/>
            <person name="Quackenbush J."/>
            <person name="Wahlestedt C."/>
            <person name="Mattick J.S."/>
            <person name="Hume D.A."/>
            <person name="Kai C."/>
            <person name="Sasaki D."/>
            <person name="Tomaru Y."/>
            <person name="Fukuda S."/>
            <person name="Kanamori-Katayama M."/>
            <person name="Suzuki M."/>
            <person name="Aoki J."/>
            <person name="Arakawa T."/>
            <person name="Iida J."/>
            <person name="Imamura K."/>
            <person name="Itoh M."/>
            <person name="Kato T."/>
            <person name="Kawaji H."/>
            <person name="Kawagashira N."/>
            <person name="Kawashima T."/>
            <person name="Kojima M."/>
            <person name="Kondo S."/>
            <person name="Konno H."/>
            <person name="Nakano K."/>
            <person name="Ninomiya N."/>
            <person name="Nishio T."/>
            <person name="Okada M."/>
            <person name="Plessy C."/>
            <person name="Shibata K."/>
            <person name="Shiraki T."/>
            <person name="Suzuki S."/>
            <person name="Tagami M."/>
            <person name="Waki K."/>
            <person name="Watahiki A."/>
            <person name="Okamura-Oho Y."/>
            <person name="Suzuki H."/>
            <person name="Kawai J."/>
            <person name="Hayashizaki Y."/>
        </authorList>
    </citation>
    <scope>NUCLEOTIDE SEQUENCE [LARGE SCALE MRNA] (ISOFORM 1)</scope>
    <source>
        <strain>C57BL/6J</strain>
        <tissue>Skin</tissue>
        <tissue>Testis</tissue>
        <tissue>Thymus</tissue>
    </source>
</reference>
<reference key="2">
    <citation type="journal article" date="2003" name="DNA Res.">
        <title>Prediction of the coding sequences of mouse homologues of KIAA gene: II. The complete nucleotide sequences of 400 mouse KIAA-homologous cDNAs identified by screening of terminal sequences of cDNA clones randomly sampled from size-fractionated libraries.</title>
        <authorList>
            <person name="Okazaki N."/>
            <person name="Kikuno R."/>
            <person name="Ohara R."/>
            <person name="Inamoto S."/>
            <person name="Aizawa H."/>
            <person name="Yuasa S."/>
            <person name="Nakajima D."/>
            <person name="Nagase T."/>
            <person name="Ohara O."/>
            <person name="Koga H."/>
        </authorList>
    </citation>
    <scope>NUCLEOTIDE SEQUENCE [LARGE SCALE MRNA] (ISOFORM 1)</scope>
    <source>
        <tissue>Brain</tissue>
    </source>
</reference>
<reference key="3">
    <citation type="journal article" date="2004" name="Genome Res.">
        <title>The status, quality, and expansion of the NIH full-length cDNA project: the Mammalian Gene Collection (MGC).</title>
        <authorList>
            <consortium name="The MGC Project Team"/>
        </authorList>
    </citation>
    <scope>NUCLEOTIDE SEQUENCE [LARGE SCALE MRNA] (ISOFORM 1)</scope>
    <source>
        <strain>C57BL/6J</strain>
        <tissue>Brain</tissue>
    </source>
</reference>
<reference key="4">
    <citation type="journal article" date="2002" name="Nat. Genet.">
        <title>Mutations in PHF6 are associated with Boerjeson-Forssman-Lehmann syndrome.</title>
        <authorList>
            <person name="Lower K.M."/>
            <person name="Turner G."/>
            <person name="Kerr B.A."/>
            <person name="Mathews K.D."/>
            <person name="Shaw M.A."/>
            <person name="Gedeon A.K."/>
            <person name="Schelley S."/>
            <person name="Hoyme H.E."/>
            <person name="White S.M."/>
            <person name="Delatycki M.B."/>
            <person name="Lampe A.K."/>
            <person name="Clayton-Smith J."/>
            <person name="Stewart H."/>
            <person name="van Ravenswaay C.M.A."/>
            <person name="de Vries B.B.A."/>
            <person name="Cox B."/>
            <person name="Grompe M."/>
            <person name="Ross S."/>
            <person name="Thomas P."/>
            <person name="Mulley J.C."/>
            <person name="Gecz J."/>
        </authorList>
    </citation>
    <scope>TISSUE SPECIFICITY</scope>
    <scope>DEVELOPMENTAL STAGE</scope>
</reference>
<reference key="5">
    <citation type="journal article" date="2010" name="Cell">
        <title>A tissue-specific atlas of mouse protein phosphorylation and expression.</title>
        <authorList>
            <person name="Huttlin E.L."/>
            <person name="Jedrychowski M.P."/>
            <person name="Elias J.E."/>
            <person name="Goswami T."/>
            <person name="Rad R."/>
            <person name="Beausoleil S.A."/>
            <person name="Villen J."/>
            <person name="Haas W."/>
            <person name="Sowa M.E."/>
            <person name="Gygi S.P."/>
        </authorList>
    </citation>
    <scope>PHOSPHORYLATION [LARGE SCALE ANALYSIS] AT SER-138; SER-145 AND SER-183</scope>
    <scope>IDENTIFICATION BY MASS SPECTROMETRY [LARGE SCALE ANALYSIS]</scope>
    <source>
        <tissue>Brain</tissue>
        <tissue>Kidney</tissue>
        <tissue>Pancreas</tissue>
        <tissue>Spleen</tissue>
    </source>
</reference>
<proteinExistence type="evidence at protein level"/>
<accession>Q9D4J7</accession>
<accession>Q80T86</accession>
<accession>Q8BYT8</accession>
<accession>Q8C1B5</accession>
<evidence type="ECO:0000250" key="1"/>
<evidence type="ECO:0000250" key="2">
    <source>
        <dbReference type="UniProtKB" id="Q8IWS0"/>
    </source>
</evidence>
<evidence type="ECO:0000255" key="3"/>
<evidence type="ECO:0000255" key="4">
    <source>
        <dbReference type="PROSITE-ProRule" id="PRU01146"/>
    </source>
</evidence>
<evidence type="ECO:0000256" key="5">
    <source>
        <dbReference type="SAM" id="MobiDB-lite"/>
    </source>
</evidence>
<evidence type="ECO:0000269" key="6">
    <source>
    </source>
</evidence>
<evidence type="ECO:0000305" key="7"/>
<evidence type="ECO:0007744" key="8">
    <source>
    </source>
</evidence>
<comment type="function">
    <text evidence="1">Transcriptional regulator that associates with ribosomal RNA promoters and suppresses ribosomal RNA (rRNA) transcription.</text>
</comment>
<comment type="subunit">
    <text evidence="1">Interacts with UBTF. Interacts with the NuRD complex component RBBP4 (via the nucleolar localization motif), the interaction mediates transcriptional repression activity (By similarity).</text>
</comment>
<comment type="subcellular location">
    <subcellularLocation>
        <location evidence="1">Nucleus</location>
    </subcellularLocation>
    <subcellularLocation>
        <location evidence="1">Nucleus</location>
        <location evidence="1">Nucleolus</location>
    </subcellularLocation>
    <subcellularLocation>
        <location evidence="2">Chromosome</location>
        <location evidence="2">Centromere</location>
        <location evidence="2">Kinetochore</location>
    </subcellularLocation>
    <text evidence="1">Nuclear, it particularly localizes to the nucleolus.</text>
</comment>
<comment type="alternative products">
    <event type="alternative splicing"/>
    <isoform>
        <id>Q9D4J7-1</id>
        <name>1</name>
        <sequence type="displayed"/>
    </isoform>
    <isoform>
        <id>Q9D4J7-2</id>
        <name>2</name>
        <sequence type="described" ref="VSP_009375"/>
    </isoform>
</comment>
<comment type="tissue specificity">
    <text evidence="6">At 12.5 dpc it is highly expressed in the embryonic central nervous system and at lower levels in other tissues. Very low levels present throughout the adult brain.</text>
</comment>
<comment type="developmental stage">
    <text evidence="6">Expression is high in the embryonic and early postnatal stages.</text>
</comment>
<comment type="domain">
    <text evidence="1">The PHD-type zinc finger 1 mediates both nucleolar localization and interaction with UBTF.</text>
</comment>
<comment type="domain">
    <text evidence="2">The ePHD2 domain folds as an integrated structural module comprizing the C2HC pre-PHD-type 2 zinc finger and the PHD-type 2 zinc finger. It mediates non-specific binding to dsDNA, but doesn't bind histones in contrast to many PHD-type zinc fingers.</text>
</comment>
<comment type="sequence caution" evidence="7">
    <conflict type="frameshift">
        <sequence resource="EMBL-CDS" id="BAC29968"/>
    </conflict>
</comment>
<comment type="sequence caution" evidence="7">
    <conflict type="erroneous initiation">
        <sequence resource="EMBL-CDS" id="BAC65842"/>
    </conflict>
</comment>
<organism>
    <name type="scientific">Mus musculus</name>
    <name type="common">Mouse</name>
    <dbReference type="NCBI Taxonomy" id="10090"/>
    <lineage>
        <taxon>Eukaryota</taxon>
        <taxon>Metazoa</taxon>
        <taxon>Chordata</taxon>
        <taxon>Craniata</taxon>
        <taxon>Vertebrata</taxon>
        <taxon>Euteleostomi</taxon>
        <taxon>Mammalia</taxon>
        <taxon>Eutheria</taxon>
        <taxon>Euarchontoglires</taxon>
        <taxon>Glires</taxon>
        <taxon>Rodentia</taxon>
        <taxon>Myomorpha</taxon>
        <taxon>Muroidea</taxon>
        <taxon>Muridae</taxon>
        <taxon>Murinae</taxon>
        <taxon>Mus</taxon>
        <taxon>Mus</taxon>
    </lineage>
</organism>
<feature type="initiator methionine" description="Removed" evidence="2">
    <location>
        <position position="1"/>
    </location>
</feature>
<feature type="chain" id="PRO_0000059294" description="PHD finger protein 6">
    <location>
        <begin position="2"/>
        <end position="364"/>
    </location>
</feature>
<feature type="zinc finger region" description="C2HC pre-PHD-type 1" evidence="4">
    <location>
        <begin position="14"/>
        <end position="52"/>
    </location>
</feature>
<feature type="zinc finger region" description="PHD-type 1" evidence="4">
    <location>
        <begin position="80"/>
        <end position="132"/>
    </location>
</feature>
<feature type="zinc finger region" description="C2HC pre-PHD-type 2" evidence="4">
    <location>
        <begin position="209"/>
        <end position="249"/>
    </location>
</feature>
<feature type="zinc finger region" description="PHD-type 2" evidence="4">
    <location>
        <begin position="278"/>
        <end position="330"/>
    </location>
</feature>
<feature type="region of interest" description="Extended PHD1 domain (ePHD1)" evidence="4">
    <location>
        <begin position="14"/>
        <end position="132"/>
    </location>
</feature>
<feature type="region of interest" description="Disordered" evidence="5">
    <location>
        <begin position="139"/>
        <end position="211"/>
    </location>
</feature>
<feature type="region of interest" description="Extended PHD2 domain (ePHD2)" evidence="4">
    <location>
        <begin position="209"/>
        <end position="330"/>
    </location>
</feature>
<feature type="region of interest" description="Disordered" evidence="5">
    <location>
        <begin position="330"/>
        <end position="364"/>
    </location>
</feature>
<feature type="short sequence motif" description="Nuclear localization signal" evidence="3">
    <location>
        <begin position="13"/>
        <end position="16"/>
    </location>
</feature>
<feature type="short sequence motif" description="Nuclear localization signal" evidence="3">
    <location>
        <begin position="129"/>
        <end position="133"/>
    </location>
</feature>
<feature type="short sequence motif" description="Nucleolar localization signal" evidence="3">
    <location>
        <begin position="157"/>
        <end position="169"/>
    </location>
</feature>
<feature type="compositionally biased region" description="Basic residues" evidence="5">
    <location>
        <begin position="157"/>
        <end position="171"/>
    </location>
</feature>
<feature type="compositionally biased region" description="Polar residues" evidence="5">
    <location>
        <begin position="354"/>
        <end position="364"/>
    </location>
</feature>
<feature type="modified residue" description="N-acetylserine" evidence="2">
    <location>
        <position position="2"/>
    </location>
</feature>
<feature type="modified residue" description="Phosphoserine" evidence="8">
    <location>
        <position position="138"/>
    </location>
</feature>
<feature type="modified residue" description="Phosphoserine" evidence="8">
    <location>
        <position position="145"/>
    </location>
</feature>
<feature type="modified residue" description="Phosphoserine" evidence="2">
    <location>
        <position position="155"/>
    </location>
</feature>
<feature type="modified residue" description="Phosphoserine" evidence="8">
    <location>
        <position position="183"/>
    </location>
</feature>
<feature type="modified residue" description="Phosphoserine" evidence="2">
    <location>
        <position position="199"/>
    </location>
</feature>
<feature type="modified residue" description="Phosphothreonine" evidence="2">
    <location>
        <position position="357"/>
    </location>
</feature>
<feature type="cross-link" description="Glycyl lysine isopeptide (Lys-Gly) (interchain with G-Cter in SUMO2)" evidence="2">
    <location>
        <position position="173"/>
    </location>
</feature>
<feature type="cross-link" description="Glycyl lysine isopeptide (Lys-Gly) (interchain with G-Cter in SUMO2)" evidence="2">
    <location>
        <position position="227"/>
    </location>
</feature>
<feature type="splice variant" id="VSP_009375" description="In isoform 2." evidence="7">
    <location>
        <begin position="1"/>
        <end position="80"/>
    </location>
</feature>